<comment type="function">
    <text evidence="1">Catalyzes the reduction of crotonobetainyl-CoA to gamma-butyrobetainyl-CoA.</text>
</comment>
<comment type="catalytic activity">
    <reaction evidence="1">
        <text>4-(trimethylamino)butanoyl-CoA + oxidized [electron-transfer flavoprotein] + H(+) = crotonobetainyl-CoA + reduced [electron-transfer flavoprotein]</text>
        <dbReference type="Rhea" id="RHEA:51584"/>
        <dbReference type="Rhea" id="RHEA-COMP:10685"/>
        <dbReference type="Rhea" id="RHEA-COMP:10686"/>
        <dbReference type="ChEBI" id="CHEBI:15378"/>
        <dbReference type="ChEBI" id="CHEBI:57692"/>
        <dbReference type="ChEBI" id="CHEBI:58307"/>
        <dbReference type="ChEBI" id="CHEBI:60933"/>
        <dbReference type="ChEBI" id="CHEBI:61513"/>
        <dbReference type="EC" id="1.3.8.13"/>
    </reaction>
</comment>
<comment type="cofactor">
    <cofactor evidence="1">
        <name>FAD</name>
        <dbReference type="ChEBI" id="CHEBI:57692"/>
    </cofactor>
</comment>
<comment type="pathway">
    <text evidence="1">Amine and polyamine metabolism; carnitine metabolism.</text>
</comment>
<comment type="subunit">
    <text evidence="1">Homotetramer.</text>
</comment>
<comment type="subcellular location">
    <subcellularLocation>
        <location evidence="1">Cytoplasm</location>
    </subcellularLocation>
</comment>
<comment type="similarity">
    <text evidence="1">Belongs to the acyl-CoA dehydrogenase family.</text>
</comment>
<protein>
    <recommendedName>
        <fullName evidence="1">Crotonobetainyl-CoA reductase</fullName>
        <ecNumber evidence="1">1.3.8.13</ecNumber>
    </recommendedName>
    <alternativeName>
        <fullName evidence="1">Crotonobetainyl-CoA dehydrogenase</fullName>
    </alternativeName>
</protein>
<gene>
    <name evidence="1" type="primary">caiA</name>
    <name type="ordered locus">SCH_0067</name>
</gene>
<keyword id="KW-0963">Cytoplasm</keyword>
<keyword id="KW-0274">FAD</keyword>
<keyword id="KW-0285">Flavoprotein</keyword>
<keyword id="KW-0560">Oxidoreductase</keyword>
<name>CAIA_SALCH</name>
<evidence type="ECO:0000255" key="1">
    <source>
        <dbReference type="HAMAP-Rule" id="MF_01052"/>
    </source>
</evidence>
<organism>
    <name type="scientific">Salmonella choleraesuis (strain SC-B67)</name>
    <dbReference type="NCBI Taxonomy" id="321314"/>
    <lineage>
        <taxon>Bacteria</taxon>
        <taxon>Pseudomonadati</taxon>
        <taxon>Pseudomonadota</taxon>
        <taxon>Gammaproteobacteria</taxon>
        <taxon>Enterobacterales</taxon>
        <taxon>Enterobacteriaceae</taxon>
        <taxon>Salmonella</taxon>
    </lineage>
</organism>
<sequence>MDFNLNDEQELFVAGIRELMASENWEAYFAECDRDSVYPERFVKALADMGIDSLLIPEEHGGLEAGFVTVAAVWMELGRLGAPTYVLYQLPGGFNTFLREGTQEQIDKIMAFRGTGKQMWNSAITEPGAGSDVGSLKTTYTRKNGKVYLNGSKCFITSSAYTPYIVVMARDGASPDKPVYTEWFVDMSKAGIKVNKLEKLGLRMDSCCEITFDDVELDEKDMFGREGNGFNRVKEEFDHERFLVALTNYGTAMCAFEDAARYANQRVQFGEAIGRFQLIQEKFAHMAIKLNSMKNMLLEAAWKADNGTITSGDAAMCKYFCANAAFEVVDTAMQVLGGVGIAGNHRITRFWRDLRVDRVSGGSDEMQILTLGRAVLKQYR</sequence>
<dbReference type="EC" id="1.3.8.13" evidence="1"/>
<dbReference type="EMBL" id="AE017220">
    <property type="protein sequence ID" value="AAX63973.1"/>
    <property type="molecule type" value="Genomic_DNA"/>
</dbReference>
<dbReference type="RefSeq" id="WP_000347134.1">
    <property type="nucleotide sequence ID" value="NC_006905.1"/>
</dbReference>
<dbReference type="SMR" id="Q57TI8"/>
<dbReference type="GeneID" id="44979088"/>
<dbReference type="KEGG" id="sec:SCH_0067"/>
<dbReference type="HOGENOM" id="CLU_018204_0_2_6"/>
<dbReference type="UniPathway" id="UPA00117"/>
<dbReference type="Proteomes" id="UP000000538">
    <property type="component" value="Chromosome"/>
</dbReference>
<dbReference type="GO" id="GO:0005737">
    <property type="term" value="C:cytoplasm"/>
    <property type="evidence" value="ECO:0007669"/>
    <property type="project" value="UniProtKB-SubCell"/>
</dbReference>
<dbReference type="GO" id="GO:0003995">
    <property type="term" value="F:acyl-CoA dehydrogenase activity"/>
    <property type="evidence" value="ECO:0007669"/>
    <property type="project" value="InterPro"/>
</dbReference>
<dbReference type="GO" id="GO:0050660">
    <property type="term" value="F:flavin adenine dinucleotide binding"/>
    <property type="evidence" value="ECO:0007669"/>
    <property type="project" value="InterPro"/>
</dbReference>
<dbReference type="GO" id="GO:0009437">
    <property type="term" value="P:carnitine metabolic process"/>
    <property type="evidence" value="ECO:0007669"/>
    <property type="project" value="UniProtKB-UniRule"/>
</dbReference>
<dbReference type="CDD" id="cd00567">
    <property type="entry name" value="ACAD"/>
    <property type="match status" value="1"/>
</dbReference>
<dbReference type="FunFam" id="1.20.140.10:FF:000001">
    <property type="entry name" value="Acyl-CoA dehydrogenase"/>
    <property type="match status" value="1"/>
</dbReference>
<dbReference type="FunFam" id="2.40.110.10:FF:000002">
    <property type="entry name" value="Acyl-CoA dehydrogenase fadE12"/>
    <property type="match status" value="1"/>
</dbReference>
<dbReference type="FunFam" id="1.10.540.10:FF:000005">
    <property type="entry name" value="Crotonobetainyl-CoA reductase"/>
    <property type="match status" value="1"/>
</dbReference>
<dbReference type="Gene3D" id="1.10.540.10">
    <property type="entry name" value="Acyl-CoA dehydrogenase/oxidase, N-terminal domain"/>
    <property type="match status" value="1"/>
</dbReference>
<dbReference type="Gene3D" id="2.40.110.10">
    <property type="entry name" value="Butyryl-CoA Dehydrogenase, subunit A, domain 2"/>
    <property type="match status" value="1"/>
</dbReference>
<dbReference type="Gene3D" id="1.20.140.10">
    <property type="entry name" value="Butyryl-CoA Dehydrogenase, subunit A, domain 3"/>
    <property type="match status" value="1"/>
</dbReference>
<dbReference type="HAMAP" id="MF_01052">
    <property type="entry name" value="CaiA"/>
    <property type="match status" value="1"/>
</dbReference>
<dbReference type="InterPro" id="IPR006089">
    <property type="entry name" value="Acyl-CoA_DH_CS"/>
</dbReference>
<dbReference type="InterPro" id="IPR006091">
    <property type="entry name" value="Acyl-CoA_Oxase/DH_mid-dom"/>
</dbReference>
<dbReference type="InterPro" id="IPR046373">
    <property type="entry name" value="Acyl-CoA_Oxase/DH_mid-dom_sf"/>
</dbReference>
<dbReference type="InterPro" id="IPR036250">
    <property type="entry name" value="AcylCo_DH-like_C"/>
</dbReference>
<dbReference type="InterPro" id="IPR009075">
    <property type="entry name" value="AcylCo_DH/oxidase_C"/>
</dbReference>
<dbReference type="InterPro" id="IPR013786">
    <property type="entry name" value="AcylCoA_DH/ox_N"/>
</dbReference>
<dbReference type="InterPro" id="IPR037069">
    <property type="entry name" value="AcylCoA_DH/ox_N_sf"/>
</dbReference>
<dbReference type="InterPro" id="IPR009100">
    <property type="entry name" value="AcylCoA_DH/oxidase_NM_dom_sf"/>
</dbReference>
<dbReference type="InterPro" id="IPR023450">
    <property type="entry name" value="CaiA"/>
</dbReference>
<dbReference type="NCBIfam" id="NF002885">
    <property type="entry name" value="PRK03354.1"/>
    <property type="match status" value="1"/>
</dbReference>
<dbReference type="PANTHER" id="PTHR43884">
    <property type="entry name" value="ACYL-COA DEHYDROGENASE"/>
    <property type="match status" value="1"/>
</dbReference>
<dbReference type="PANTHER" id="PTHR43884:SF12">
    <property type="entry name" value="ISOVALERYL-COA DEHYDROGENASE, MITOCHONDRIAL-RELATED"/>
    <property type="match status" value="1"/>
</dbReference>
<dbReference type="Pfam" id="PF00441">
    <property type="entry name" value="Acyl-CoA_dh_1"/>
    <property type="match status" value="1"/>
</dbReference>
<dbReference type="Pfam" id="PF02770">
    <property type="entry name" value="Acyl-CoA_dh_M"/>
    <property type="match status" value="1"/>
</dbReference>
<dbReference type="Pfam" id="PF02771">
    <property type="entry name" value="Acyl-CoA_dh_N"/>
    <property type="match status" value="1"/>
</dbReference>
<dbReference type="PIRSF" id="PIRSF016578">
    <property type="entry name" value="HsaA"/>
    <property type="match status" value="1"/>
</dbReference>
<dbReference type="SUPFAM" id="SSF47203">
    <property type="entry name" value="Acyl-CoA dehydrogenase C-terminal domain-like"/>
    <property type="match status" value="1"/>
</dbReference>
<dbReference type="SUPFAM" id="SSF56645">
    <property type="entry name" value="Acyl-CoA dehydrogenase NM domain-like"/>
    <property type="match status" value="1"/>
</dbReference>
<dbReference type="PROSITE" id="PS00072">
    <property type="entry name" value="ACYL_COA_DH_1"/>
    <property type="match status" value="1"/>
</dbReference>
<dbReference type="PROSITE" id="PS00073">
    <property type="entry name" value="ACYL_COA_DH_2"/>
    <property type="match status" value="1"/>
</dbReference>
<feature type="chain" id="PRO_1000064350" description="Crotonobetainyl-CoA reductase">
    <location>
        <begin position="1"/>
        <end position="380"/>
    </location>
</feature>
<reference key="1">
    <citation type="journal article" date="2005" name="Nucleic Acids Res.">
        <title>The genome sequence of Salmonella enterica serovar Choleraesuis, a highly invasive and resistant zoonotic pathogen.</title>
        <authorList>
            <person name="Chiu C.-H."/>
            <person name="Tang P."/>
            <person name="Chu C."/>
            <person name="Hu S."/>
            <person name="Bao Q."/>
            <person name="Yu J."/>
            <person name="Chou Y.-Y."/>
            <person name="Wang H.-S."/>
            <person name="Lee Y.-S."/>
        </authorList>
    </citation>
    <scope>NUCLEOTIDE SEQUENCE [LARGE SCALE GENOMIC DNA]</scope>
    <source>
        <strain>SC-B67</strain>
    </source>
</reference>
<accession>Q57TI8</accession>
<proteinExistence type="inferred from homology"/>